<keyword id="KW-0067">ATP-binding</keyword>
<keyword id="KW-0119">Carbohydrate metabolism</keyword>
<keyword id="KW-0320">Glycogen biosynthesis</keyword>
<keyword id="KW-0321">Glycogen metabolism</keyword>
<keyword id="KW-0547">Nucleotide-binding</keyword>
<keyword id="KW-0548">Nucleotidyltransferase</keyword>
<keyword id="KW-1185">Reference proteome</keyword>
<keyword id="KW-0808">Transferase</keyword>
<evidence type="ECO:0000255" key="1">
    <source>
        <dbReference type="HAMAP-Rule" id="MF_00624"/>
    </source>
</evidence>
<reference key="1">
    <citation type="submission" date="2008-02" db="EMBL/GenBank/DDBJ databases">
        <title>Complete sequence of Synechococcus sp. PCC 7002.</title>
        <authorList>
            <person name="Li T."/>
            <person name="Zhao J."/>
            <person name="Zhao C."/>
            <person name="Liu Z."/>
            <person name="Zhao F."/>
            <person name="Marquardt J."/>
            <person name="Nomura C.T."/>
            <person name="Persson S."/>
            <person name="Detter J.C."/>
            <person name="Richardson P.M."/>
            <person name="Lanz C."/>
            <person name="Schuster S.C."/>
            <person name="Wang J."/>
            <person name="Li S."/>
            <person name="Huang X."/>
            <person name="Cai T."/>
            <person name="Yu Z."/>
            <person name="Luo J."/>
            <person name="Zhao J."/>
            <person name="Bryant D.A."/>
        </authorList>
    </citation>
    <scope>NUCLEOTIDE SEQUENCE [LARGE SCALE GENOMIC DNA]</scope>
    <source>
        <strain>ATCC 27264 / PCC 7002 / PR-6</strain>
    </source>
</reference>
<accession>B1XLF1</accession>
<feature type="chain" id="PRO_1000130508" description="Glucose-1-phosphate adenylyltransferase">
    <location>
        <begin position="1"/>
        <end position="429"/>
    </location>
</feature>
<feature type="binding site" evidence="1">
    <location>
        <position position="162"/>
    </location>
    <ligand>
        <name>alpha-D-glucose 1-phosphate</name>
        <dbReference type="ChEBI" id="CHEBI:58601"/>
    </ligand>
</feature>
<feature type="binding site" evidence="1">
    <location>
        <begin position="177"/>
        <end position="178"/>
    </location>
    <ligand>
        <name>alpha-D-glucose 1-phosphate</name>
        <dbReference type="ChEBI" id="CHEBI:58601"/>
    </ligand>
</feature>
<feature type="binding site" evidence="1">
    <location>
        <position position="209"/>
    </location>
    <ligand>
        <name>alpha-D-glucose 1-phosphate</name>
        <dbReference type="ChEBI" id="CHEBI:58601"/>
    </ligand>
</feature>
<proteinExistence type="inferred from homology"/>
<dbReference type="EC" id="2.7.7.27" evidence="1"/>
<dbReference type="EMBL" id="CP000951">
    <property type="protein sequence ID" value="ACA98111.1"/>
    <property type="molecule type" value="Genomic_DNA"/>
</dbReference>
<dbReference type="RefSeq" id="WP_012305735.1">
    <property type="nucleotide sequence ID" value="NC_010475.1"/>
</dbReference>
<dbReference type="SMR" id="B1XLF1"/>
<dbReference type="STRING" id="32049.SYNPCC7002_A0095"/>
<dbReference type="KEGG" id="syp:SYNPCC7002_A0095"/>
<dbReference type="eggNOG" id="COG0448">
    <property type="taxonomic scope" value="Bacteria"/>
</dbReference>
<dbReference type="HOGENOM" id="CLU_029499_14_4_3"/>
<dbReference type="UniPathway" id="UPA00164"/>
<dbReference type="Proteomes" id="UP000001688">
    <property type="component" value="Chromosome"/>
</dbReference>
<dbReference type="GO" id="GO:0031470">
    <property type="term" value="C:carboxysome"/>
    <property type="evidence" value="ECO:0007669"/>
    <property type="project" value="UniProtKB-ARBA"/>
</dbReference>
<dbReference type="GO" id="GO:0005524">
    <property type="term" value="F:ATP binding"/>
    <property type="evidence" value="ECO:0007669"/>
    <property type="project" value="UniProtKB-KW"/>
</dbReference>
<dbReference type="GO" id="GO:0008878">
    <property type="term" value="F:glucose-1-phosphate adenylyltransferase activity"/>
    <property type="evidence" value="ECO:0007669"/>
    <property type="project" value="UniProtKB-UniRule"/>
</dbReference>
<dbReference type="GO" id="GO:0043886">
    <property type="term" value="F:structural constituent of carboxysome shell"/>
    <property type="evidence" value="ECO:0007669"/>
    <property type="project" value="UniProtKB-ARBA"/>
</dbReference>
<dbReference type="GO" id="GO:0005978">
    <property type="term" value="P:glycogen biosynthetic process"/>
    <property type="evidence" value="ECO:0007669"/>
    <property type="project" value="UniProtKB-UniRule"/>
</dbReference>
<dbReference type="CDD" id="cd02508">
    <property type="entry name" value="ADP_Glucose_PP"/>
    <property type="match status" value="1"/>
</dbReference>
<dbReference type="CDD" id="cd04651">
    <property type="entry name" value="LbH_G1P_AT_C"/>
    <property type="match status" value="1"/>
</dbReference>
<dbReference type="Gene3D" id="2.160.10.10">
    <property type="entry name" value="Hexapeptide repeat proteins"/>
    <property type="match status" value="1"/>
</dbReference>
<dbReference type="Gene3D" id="3.90.550.10">
    <property type="entry name" value="Spore Coat Polysaccharide Biosynthesis Protein SpsA, Chain A"/>
    <property type="match status" value="1"/>
</dbReference>
<dbReference type="HAMAP" id="MF_00624">
    <property type="entry name" value="GlgC"/>
    <property type="match status" value="1"/>
</dbReference>
<dbReference type="InterPro" id="IPR011831">
    <property type="entry name" value="ADP-Glc_PPase"/>
</dbReference>
<dbReference type="InterPro" id="IPR005836">
    <property type="entry name" value="ADP_Glu_pyroP_CS"/>
</dbReference>
<dbReference type="InterPro" id="IPR023049">
    <property type="entry name" value="GlgC_bac"/>
</dbReference>
<dbReference type="InterPro" id="IPR005835">
    <property type="entry name" value="NTP_transferase_dom"/>
</dbReference>
<dbReference type="InterPro" id="IPR029044">
    <property type="entry name" value="Nucleotide-diphossugar_trans"/>
</dbReference>
<dbReference type="InterPro" id="IPR011004">
    <property type="entry name" value="Trimer_LpxA-like_sf"/>
</dbReference>
<dbReference type="NCBIfam" id="TIGR02091">
    <property type="entry name" value="glgC"/>
    <property type="match status" value="1"/>
</dbReference>
<dbReference type="NCBIfam" id="NF002772">
    <property type="entry name" value="PRK02862.1"/>
    <property type="match status" value="1"/>
</dbReference>
<dbReference type="PANTHER" id="PTHR43523:SF12">
    <property type="entry name" value="GLUCOSE-1-PHOSPHATE ADENYLYLTRANSFERASE LARGE SUBUNIT 1, CHLOROPLASTIC-RELATED"/>
    <property type="match status" value="1"/>
</dbReference>
<dbReference type="PANTHER" id="PTHR43523">
    <property type="entry name" value="GLUCOSE-1-PHOSPHATE ADENYLYLTRANSFERASE-RELATED"/>
    <property type="match status" value="1"/>
</dbReference>
<dbReference type="Pfam" id="PF25247">
    <property type="entry name" value="LbH_GLGC"/>
    <property type="match status" value="1"/>
</dbReference>
<dbReference type="Pfam" id="PF00483">
    <property type="entry name" value="NTP_transferase"/>
    <property type="match status" value="1"/>
</dbReference>
<dbReference type="SUPFAM" id="SSF53448">
    <property type="entry name" value="Nucleotide-diphospho-sugar transferases"/>
    <property type="match status" value="1"/>
</dbReference>
<dbReference type="SUPFAM" id="SSF51161">
    <property type="entry name" value="Trimeric LpxA-like enzymes"/>
    <property type="match status" value="1"/>
</dbReference>
<dbReference type="PROSITE" id="PS00808">
    <property type="entry name" value="ADP_GLC_PYROPHOSPH_1"/>
    <property type="match status" value="1"/>
</dbReference>
<dbReference type="PROSITE" id="PS00809">
    <property type="entry name" value="ADP_GLC_PYROPHOSPH_2"/>
    <property type="match status" value="1"/>
</dbReference>
<dbReference type="PROSITE" id="PS00810">
    <property type="entry name" value="ADP_GLC_PYROPHOSPH_3"/>
    <property type="match status" value="1"/>
</dbReference>
<sequence length="429" mass="48357">MKRVLGIILGGGAGTRLYPLTKLRAKPAVPLAGKYRLIDIPVSNCINSEIHKIYILTQFNSASLNRHISRTYNFTGFTEGFTEVLAAQQTKENPDWFQGTADAVRQYSWLLEDWDVDEYIILSGDHLYRMDYREFIQRHRDTGADITLSVVPVGEKVAPAFGLMKIDANGRVVDFSEKPTGEALKAMQVDTQSLGLDPEQAKEKPYIASMGIYVFKKQVLLDLLKEGKDKTDFGKEIIPDAAKDYNVQAYLFDDYWADIGTIEAFYEANLGLTKQPIPPFSFYDEKAPIYTRARYLPPTKVLNADVTESMISEGCIIKNCRIHHSVLGIRTRVEADCTIEDTMIMGADYYQPYEKRQDCLRRGKPPIGIGEGTTIRRAIIDKNARIGKNVMIVNKENVEESNREELGYYIRSGITVVLKNAVIPDGTVI</sequence>
<gene>
    <name evidence="1" type="primary">glgC</name>
    <name type="ordered locus">SYNPCC7002_A0095</name>
</gene>
<organism>
    <name type="scientific">Picosynechococcus sp. (strain ATCC 27264 / PCC 7002 / PR-6)</name>
    <name type="common">Agmenellum quadruplicatum</name>
    <dbReference type="NCBI Taxonomy" id="32049"/>
    <lineage>
        <taxon>Bacteria</taxon>
        <taxon>Bacillati</taxon>
        <taxon>Cyanobacteriota</taxon>
        <taxon>Cyanophyceae</taxon>
        <taxon>Oscillatoriophycideae</taxon>
        <taxon>Chroococcales</taxon>
        <taxon>Geminocystaceae</taxon>
        <taxon>Picosynechococcus</taxon>
    </lineage>
</organism>
<protein>
    <recommendedName>
        <fullName evidence="1">Glucose-1-phosphate adenylyltransferase</fullName>
        <ecNumber evidence="1">2.7.7.27</ecNumber>
    </recommendedName>
    <alternativeName>
        <fullName evidence="1">ADP-glucose pyrophosphorylase</fullName>
        <shortName evidence="1">ADPGlc PPase</shortName>
    </alternativeName>
    <alternativeName>
        <fullName evidence="1">ADP-glucose synthase</fullName>
    </alternativeName>
</protein>
<name>GLGC_PICP2</name>
<comment type="function">
    <text evidence="1">Involved in the biosynthesis of ADP-glucose, a building block required for the elongation reactions to produce glycogen. Catalyzes the reaction between ATP and alpha-D-glucose 1-phosphate (G1P) to produce pyrophosphate and ADP-Glc.</text>
</comment>
<comment type="catalytic activity">
    <reaction evidence="1">
        <text>alpha-D-glucose 1-phosphate + ATP + H(+) = ADP-alpha-D-glucose + diphosphate</text>
        <dbReference type="Rhea" id="RHEA:12120"/>
        <dbReference type="ChEBI" id="CHEBI:15378"/>
        <dbReference type="ChEBI" id="CHEBI:30616"/>
        <dbReference type="ChEBI" id="CHEBI:33019"/>
        <dbReference type="ChEBI" id="CHEBI:57498"/>
        <dbReference type="ChEBI" id="CHEBI:58601"/>
        <dbReference type="EC" id="2.7.7.27"/>
    </reaction>
</comment>
<comment type="pathway">
    <text evidence="1">Glycan biosynthesis; glycogen biosynthesis.</text>
</comment>
<comment type="subunit">
    <text evidence="1">Homotetramer.</text>
</comment>
<comment type="similarity">
    <text evidence="1">Belongs to the bacterial/plant glucose-1-phosphate adenylyltransferase family.</text>
</comment>